<evidence type="ECO:0000255" key="1">
    <source>
        <dbReference type="HAMAP-Rule" id="MF_00580"/>
    </source>
</evidence>
<proteinExistence type="inferred from homology"/>
<feature type="chain" id="PRO_1000025202" description="Co-chaperonin GroES">
    <location>
        <begin position="1"/>
        <end position="96"/>
    </location>
</feature>
<gene>
    <name evidence="1" type="primary">groES</name>
    <name evidence="1" type="synonym">groS</name>
    <name type="ordered locus">ABO_0633</name>
</gene>
<sequence length="96" mass="10218">MSIRPLHDRVLVRREEEETKSAGGIVLPGSAAEKPSRGEVIAVGNGKITENGDVRPLDVKAGDTVIFGQYSGSTVKVEGEELLIMSEAEILAVVED</sequence>
<keyword id="KW-0143">Chaperone</keyword>
<keyword id="KW-0963">Cytoplasm</keyword>
<keyword id="KW-1185">Reference proteome</keyword>
<organism>
    <name type="scientific">Alcanivorax borkumensis (strain ATCC 700651 / DSM 11573 / NCIMB 13689 / SK2)</name>
    <dbReference type="NCBI Taxonomy" id="393595"/>
    <lineage>
        <taxon>Bacteria</taxon>
        <taxon>Pseudomonadati</taxon>
        <taxon>Pseudomonadota</taxon>
        <taxon>Gammaproteobacteria</taxon>
        <taxon>Oceanospirillales</taxon>
        <taxon>Alcanivoracaceae</taxon>
        <taxon>Alcanivorax</taxon>
    </lineage>
</organism>
<accession>Q0VRW7</accession>
<comment type="function">
    <text evidence="1">Together with the chaperonin GroEL, plays an essential role in assisting protein folding. The GroEL-GroES system forms a nano-cage that allows encapsulation of the non-native substrate proteins and provides a physical environment optimized to promote and accelerate protein folding. GroES binds to the apical surface of the GroEL ring, thereby capping the opening of the GroEL channel.</text>
</comment>
<comment type="subunit">
    <text evidence="1">Heptamer of 7 subunits arranged in a ring. Interacts with the chaperonin GroEL.</text>
</comment>
<comment type="subcellular location">
    <subcellularLocation>
        <location evidence="1">Cytoplasm</location>
    </subcellularLocation>
</comment>
<comment type="similarity">
    <text evidence="1">Belongs to the GroES chaperonin family.</text>
</comment>
<name>CH10_ALCBS</name>
<protein>
    <recommendedName>
        <fullName evidence="1">Co-chaperonin GroES</fullName>
    </recommendedName>
    <alternativeName>
        <fullName evidence="1">10 kDa chaperonin</fullName>
    </alternativeName>
    <alternativeName>
        <fullName evidence="1">Chaperonin-10</fullName>
        <shortName evidence="1">Cpn10</shortName>
    </alternativeName>
</protein>
<reference key="1">
    <citation type="journal article" date="2006" name="Nat. Biotechnol.">
        <title>Genome sequence of the ubiquitous hydrocarbon-degrading marine bacterium Alcanivorax borkumensis.</title>
        <authorList>
            <person name="Schneiker S."/>
            <person name="Martins dos Santos V.A.P."/>
            <person name="Bartels D."/>
            <person name="Bekel T."/>
            <person name="Brecht M."/>
            <person name="Buhrmester J."/>
            <person name="Chernikova T.N."/>
            <person name="Denaro R."/>
            <person name="Ferrer M."/>
            <person name="Gertler C."/>
            <person name="Goesmann A."/>
            <person name="Golyshina O.V."/>
            <person name="Kaminski F."/>
            <person name="Khachane A.N."/>
            <person name="Lang S."/>
            <person name="Linke B."/>
            <person name="McHardy A.C."/>
            <person name="Meyer F."/>
            <person name="Nechitaylo T."/>
            <person name="Puehler A."/>
            <person name="Regenhardt D."/>
            <person name="Rupp O."/>
            <person name="Sabirova J.S."/>
            <person name="Selbitschka W."/>
            <person name="Yakimov M.M."/>
            <person name="Timmis K.N."/>
            <person name="Vorhoelter F.-J."/>
            <person name="Weidner S."/>
            <person name="Kaiser O."/>
            <person name="Golyshin P.N."/>
        </authorList>
    </citation>
    <scope>NUCLEOTIDE SEQUENCE [LARGE SCALE GENOMIC DNA]</scope>
    <source>
        <strain>ATCC 700651 / DSM 11573 / NCIMB 13689 / SK2</strain>
    </source>
</reference>
<dbReference type="EMBL" id="AM286690">
    <property type="protein sequence ID" value="CAL16081.1"/>
    <property type="molecule type" value="Genomic_DNA"/>
</dbReference>
<dbReference type="RefSeq" id="WP_011587918.1">
    <property type="nucleotide sequence ID" value="NC_008260.1"/>
</dbReference>
<dbReference type="SMR" id="Q0VRW7"/>
<dbReference type="STRING" id="393595.ABO_0633"/>
<dbReference type="KEGG" id="abo:ABO_0633"/>
<dbReference type="eggNOG" id="COG0234">
    <property type="taxonomic scope" value="Bacteria"/>
</dbReference>
<dbReference type="HOGENOM" id="CLU_132825_1_1_6"/>
<dbReference type="OrthoDB" id="9806791at2"/>
<dbReference type="Proteomes" id="UP000008871">
    <property type="component" value="Chromosome"/>
</dbReference>
<dbReference type="GO" id="GO:0005737">
    <property type="term" value="C:cytoplasm"/>
    <property type="evidence" value="ECO:0007669"/>
    <property type="project" value="UniProtKB-SubCell"/>
</dbReference>
<dbReference type="GO" id="GO:0005524">
    <property type="term" value="F:ATP binding"/>
    <property type="evidence" value="ECO:0007669"/>
    <property type="project" value="InterPro"/>
</dbReference>
<dbReference type="GO" id="GO:0046872">
    <property type="term" value="F:metal ion binding"/>
    <property type="evidence" value="ECO:0007669"/>
    <property type="project" value="TreeGrafter"/>
</dbReference>
<dbReference type="GO" id="GO:0044183">
    <property type="term" value="F:protein folding chaperone"/>
    <property type="evidence" value="ECO:0007669"/>
    <property type="project" value="InterPro"/>
</dbReference>
<dbReference type="GO" id="GO:0051087">
    <property type="term" value="F:protein-folding chaperone binding"/>
    <property type="evidence" value="ECO:0007669"/>
    <property type="project" value="TreeGrafter"/>
</dbReference>
<dbReference type="GO" id="GO:0051082">
    <property type="term" value="F:unfolded protein binding"/>
    <property type="evidence" value="ECO:0007669"/>
    <property type="project" value="TreeGrafter"/>
</dbReference>
<dbReference type="GO" id="GO:0051085">
    <property type="term" value="P:chaperone cofactor-dependent protein refolding"/>
    <property type="evidence" value="ECO:0007669"/>
    <property type="project" value="TreeGrafter"/>
</dbReference>
<dbReference type="CDD" id="cd00320">
    <property type="entry name" value="cpn10"/>
    <property type="match status" value="1"/>
</dbReference>
<dbReference type="FunFam" id="2.30.33.40:FF:000001">
    <property type="entry name" value="10 kDa chaperonin"/>
    <property type="match status" value="1"/>
</dbReference>
<dbReference type="Gene3D" id="2.30.33.40">
    <property type="entry name" value="GroES chaperonin"/>
    <property type="match status" value="1"/>
</dbReference>
<dbReference type="HAMAP" id="MF_00580">
    <property type="entry name" value="CH10"/>
    <property type="match status" value="1"/>
</dbReference>
<dbReference type="InterPro" id="IPR020818">
    <property type="entry name" value="Chaperonin_GroES"/>
</dbReference>
<dbReference type="InterPro" id="IPR037124">
    <property type="entry name" value="Chaperonin_GroES_sf"/>
</dbReference>
<dbReference type="InterPro" id="IPR018369">
    <property type="entry name" value="Chaprnonin_Cpn10_CS"/>
</dbReference>
<dbReference type="InterPro" id="IPR011032">
    <property type="entry name" value="GroES-like_sf"/>
</dbReference>
<dbReference type="NCBIfam" id="NF001526">
    <property type="entry name" value="PRK00364.1-1"/>
    <property type="match status" value="1"/>
</dbReference>
<dbReference type="NCBIfam" id="NF001527">
    <property type="entry name" value="PRK00364.1-2"/>
    <property type="match status" value="1"/>
</dbReference>
<dbReference type="NCBIfam" id="NF001531">
    <property type="entry name" value="PRK00364.2-2"/>
    <property type="match status" value="1"/>
</dbReference>
<dbReference type="NCBIfam" id="NF001533">
    <property type="entry name" value="PRK00364.2-4"/>
    <property type="match status" value="1"/>
</dbReference>
<dbReference type="PANTHER" id="PTHR10772">
    <property type="entry name" value="10 KDA HEAT SHOCK PROTEIN"/>
    <property type="match status" value="1"/>
</dbReference>
<dbReference type="PANTHER" id="PTHR10772:SF58">
    <property type="entry name" value="CO-CHAPERONIN GROES"/>
    <property type="match status" value="1"/>
</dbReference>
<dbReference type="Pfam" id="PF00166">
    <property type="entry name" value="Cpn10"/>
    <property type="match status" value="1"/>
</dbReference>
<dbReference type="PRINTS" id="PR00297">
    <property type="entry name" value="CHAPERONIN10"/>
</dbReference>
<dbReference type="SMART" id="SM00883">
    <property type="entry name" value="Cpn10"/>
    <property type="match status" value="1"/>
</dbReference>
<dbReference type="SUPFAM" id="SSF50129">
    <property type="entry name" value="GroES-like"/>
    <property type="match status" value="1"/>
</dbReference>
<dbReference type="PROSITE" id="PS00681">
    <property type="entry name" value="CHAPERONINS_CPN10"/>
    <property type="match status" value="1"/>
</dbReference>